<accession>Q0SYD1</accession>
<proteinExistence type="inferred from homology"/>
<dbReference type="EC" id="1.1.-.-" evidence="1"/>
<dbReference type="EMBL" id="CP000266">
    <property type="protein sequence ID" value="ABF05934.1"/>
    <property type="molecule type" value="Genomic_DNA"/>
</dbReference>
<dbReference type="RefSeq" id="WP_000586964.1">
    <property type="nucleotide sequence ID" value="NC_008258.1"/>
</dbReference>
<dbReference type="SMR" id="Q0SYD1"/>
<dbReference type="GeneID" id="93778319"/>
<dbReference type="KEGG" id="sfv:SFV_3926"/>
<dbReference type="HOGENOM" id="CLU_020639_0_0_6"/>
<dbReference type="Proteomes" id="UP000000659">
    <property type="component" value="Chromosome"/>
</dbReference>
<dbReference type="GO" id="GO:0005886">
    <property type="term" value="C:plasma membrane"/>
    <property type="evidence" value="ECO:0007669"/>
    <property type="project" value="UniProtKB-SubCell"/>
</dbReference>
<dbReference type="GO" id="GO:0010181">
    <property type="term" value="F:FMN binding"/>
    <property type="evidence" value="ECO:0007669"/>
    <property type="project" value="InterPro"/>
</dbReference>
<dbReference type="GO" id="GO:0004459">
    <property type="term" value="F:L-lactate dehydrogenase activity"/>
    <property type="evidence" value="ECO:0007669"/>
    <property type="project" value="UniProtKB-UniRule"/>
</dbReference>
<dbReference type="GO" id="GO:0009060">
    <property type="term" value="P:aerobic respiration"/>
    <property type="evidence" value="ECO:0007669"/>
    <property type="project" value="TreeGrafter"/>
</dbReference>
<dbReference type="GO" id="GO:0006089">
    <property type="term" value="P:lactate metabolic process"/>
    <property type="evidence" value="ECO:0007669"/>
    <property type="project" value="UniProtKB-UniRule"/>
</dbReference>
<dbReference type="CDD" id="cd02809">
    <property type="entry name" value="alpha_hydroxyacid_oxid_FMN"/>
    <property type="match status" value="1"/>
</dbReference>
<dbReference type="FunFam" id="3.20.20.70:FF:000029">
    <property type="entry name" value="L-lactate dehydrogenase"/>
    <property type="match status" value="1"/>
</dbReference>
<dbReference type="Gene3D" id="3.20.20.70">
    <property type="entry name" value="Aldolase class I"/>
    <property type="match status" value="1"/>
</dbReference>
<dbReference type="HAMAP" id="MF_01559">
    <property type="entry name" value="L_lact_dehydr"/>
    <property type="match status" value="1"/>
</dbReference>
<dbReference type="InterPro" id="IPR013785">
    <property type="entry name" value="Aldolase_TIM"/>
</dbReference>
<dbReference type="InterPro" id="IPR012133">
    <property type="entry name" value="Alpha-hydoxy_acid_DH_FMN"/>
</dbReference>
<dbReference type="InterPro" id="IPR000262">
    <property type="entry name" value="FMN-dep_DH"/>
</dbReference>
<dbReference type="InterPro" id="IPR037396">
    <property type="entry name" value="FMN_HAD"/>
</dbReference>
<dbReference type="InterPro" id="IPR008259">
    <property type="entry name" value="FMN_hydac_DH_AS"/>
</dbReference>
<dbReference type="InterPro" id="IPR020920">
    <property type="entry name" value="LldD"/>
</dbReference>
<dbReference type="NCBIfam" id="NF033901">
    <property type="entry name" value="L_lactate_LldD"/>
    <property type="match status" value="1"/>
</dbReference>
<dbReference type="NCBIfam" id="NF008398">
    <property type="entry name" value="PRK11197.1"/>
    <property type="match status" value="1"/>
</dbReference>
<dbReference type="PANTHER" id="PTHR10578:SF85">
    <property type="entry name" value="L-LACTATE DEHYDROGENASE"/>
    <property type="match status" value="1"/>
</dbReference>
<dbReference type="PANTHER" id="PTHR10578">
    <property type="entry name" value="S -2-HYDROXY-ACID OXIDASE-RELATED"/>
    <property type="match status" value="1"/>
</dbReference>
<dbReference type="Pfam" id="PF01070">
    <property type="entry name" value="FMN_dh"/>
    <property type="match status" value="1"/>
</dbReference>
<dbReference type="PIRSF" id="PIRSF000138">
    <property type="entry name" value="Al-hdrx_acd_dh"/>
    <property type="match status" value="1"/>
</dbReference>
<dbReference type="SUPFAM" id="SSF51395">
    <property type="entry name" value="FMN-linked oxidoreductases"/>
    <property type="match status" value="1"/>
</dbReference>
<dbReference type="PROSITE" id="PS00557">
    <property type="entry name" value="FMN_HYDROXY_ACID_DH_1"/>
    <property type="match status" value="1"/>
</dbReference>
<dbReference type="PROSITE" id="PS51349">
    <property type="entry name" value="FMN_HYDROXY_ACID_DH_2"/>
    <property type="match status" value="1"/>
</dbReference>
<sequence>MIISAASDYRAAAQRILPPFLFHYMDGGAYSEYTLRRNVEDLSEVALRQRILKNMSDLSLETTLFNEKLSMPVALAPVGLCGMYARRGEVQAAKAADAHGIPFTLSTVSVCPIEEVAPAIKRPMWFQLYVLRDRGFMRNALERAKAAGCSTLVFTVDMPTPGARYRDAHSGMSGPNAAMRRYLQAVTHPQWAWDVGLNGRPHDLGNISAYLGKPTGLEDYIGWLGNNFDPSISWKDLEWIRDFWDGPMVIKGILDPEDARDAVRFGADGIVVSNHGGRQLDGVLSSARALPAIADAVKGDIAILADSGIRNGLDVVRMIALGADTVLLGRAFLYALATAGQAGVANLLNLIEKEMKVAMTLTGAKSISEITQDSLVQGLGKELPTALAPMAKGNAA</sequence>
<reference key="1">
    <citation type="journal article" date="2006" name="BMC Genomics">
        <title>Complete genome sequence of Shigella flexneri 5b and comparison with Shigella flexneri 2a.</title>
        <authorList>
            <person name="Nie H."/>
            <person name="Yang F."/>
            <person name="Zhang X."/>
            <person name="Yang J."/>
            <person name="Chen L."/>
            <person name="Wang J."/>
            <person name="Xiong Z."/>
            <person name="Peng J."/>
            <person name="Sun L."/>
            <person name="Dong J."/>
            <person name="Xue Y."/>
            <person name="Xu X."/>
            <person name="Chen S."/>
            <person name="Yao Z."/>
            <person name="Shen Y."/>
            <person name="Jin Q."/>
        </authorList>
    </citation>
    <scope>NUCLEOTIDE SEQUENCE [LARGE SCALE GENOMIC DNA]</scope>
    <source>
        <strain>8401</strain>
    </source>
</reference>
<keyword id="KW-0997">Cell inner membrane</keyword>
<keyword id="KW-1003">Cell membrane</keyword>
<keyword id="KW-0285">Flavoprotein</keyword>
<keyword id="KW-0288">FMN</keyword>
<keyword id="KW-0472">Membrane</keyword>
<keyword id="KW-0560">Oxidoreductase</keyword>
<evidence type="ECO:0000255" key="1">
    <source>
        <dbReference type="HAMAP-Rule" id="MF_01559"/>
    </source>
</evidence>
<protein>
    <recommendedName>
        <fullName evidence="1">L-lactate dehydrogenase</fullName>
        <ecNumber evidence="1">1.1.-.-</ecNumber>
    </recommendedName>
</protein>
<gene>
    <name evidence="1" type="primary">lldD</name>
    <name type="ordered locus">SFV_3926</name>
</gene>
<feature type="chain" id="PRO_1000068994" description="L-lactate dehydrogenase">
    <location>
        <begin position="1"/>
        <end position="396"/>
    </location>
</feature>
<feature type="domain" description="FMN hydroxy acid dehydrogenase" evidence="1">
    <location>
        <begin position="1"/>
        <end position="380"/>
    </location>
</feature>
<feature type="active site" description="Proton acceptor" evidence="1">
    <location>
        <position position="275"/>
    </location>
</feature>
<feature type="binding site" evidence="1">
    <location>
        <position position="24"/>
    </location>
    <ligand>
        <name>substrate</name>
    </ligand>
</feature>
<feature type="binding site" evidence="1">
    <location>
        <position position="106"/>
    </location>
    <ligand>
        <name>FMN</name>
        <dbReference type="ChEBI" id="CHEBI:58210"/>
    </ligand>
</feature>
<feature type="binding site" evidence="1">
    <location>
        <position position="127"/>
    </location>
    <ligand>
        <name>FMN</name>
        <dbReference type="ChEBI" id="CHEBI:58210"/>
    </ligand>
</feature>
<feature type="binding site" evidence="1">
    <location>
        <position position="129"/>
    </location>
    <ligand>
        <name>substrate</name>
    </ligand>
</feature>
<feature type="binding site" evidence="1">
    <location>
        <position position="155"/>
    </location>
    <ligand>
        <name>FMN</name>
        <dbReference type="ChEBI" id="CHEBI:58210"/>
    </ligand>
</feature>
<feature type="binding site" evidence="1">
    <location>
        <position position="164"/>
    </location>
    <ligand>
        <name>substrate</name>
    </ligand>
</feature>
<feature type="binding site" evidence="1">
    <location>
        <position position="251"/>
    </location>
    <ligand>
        <name>FMN</name>
        <dbReference type="ChEBI" id="CHEBI:58210"/>
    </ligand>
</feature>
<feature type="binding site" evidence="1">
    <location>
        <position position="278"/>
    </location>
    <ligand>
        <name>substrate</name>
    </ligand>
</feature>
<feature type="binding site" evidence="1">
    <location>
        <begin position="306"/>
        <end position="330"/>
    </location>
    <ligand>
        <name>FMN</name>
        <dbReference type="ChEBI" id="CHEBI:58210"/>
    </ligand>
</feature>
<comment type="function">
    <text evidence="1">Catalyzes the conversion of L-lactate to pyruvate. Is coupled to the respiratory chain.</text>
</comment>
<comment type="catalytic activity">
    <reaction evidence="1">
        <text>(S)-lactate + A = pyruvate + AH2</text>
        <dbReference type="Rhea" id="RHEA:45816"/>
        <dbReference type="ChEBI" id="CHEBI:13193"/>
        <dbReference type="ChEBI" id="CHEBI:15361"/>
        <dbReference type="ChEBI" id="CHEBI:16651"/>
        <dbReference type="ChEBI" id="CHEBI:17499"/>
    </reaction>
</comment>
<comment type="cofactor">
    <cofactor evidence="1">
        <name>FMN</name>
        <dbReference type="ChEBI" id="CHEBI:58210"/>
    </cofactor>
</comment>
<comment type="subcellular location">
    <subcellularLocation>
        <location evidence="1">Cell inner membrane</location>
        <topology evidence="1">Peripheral membrane protein</topology>
    </subcellularLocation>
</comment>
<comment type="similarity">
    <text evidence="1">Belongs to the FMN-dependent alpha-hydroxy acid dehydrogenase family.</text>
</comment>
<name>LLDD_SHIF8</name>
<organism>
    <name type="scientific">Shigella flexneri serotype 5b (strain 8401)</name>
    <dbReference type="NCBI Taxonomy" id="373384"/>
    <lineage>
        <taxon>Bacteria</taxon>
        <taxon>Pseudomonadati</taxon>
        <taxon>Pseudomonadota</taxon>
        <taxon>Gammaproteobacteria</taxon>
        <taxon>Enterobacterales</taxon>
        <taxon>Enterobacteriaceae</taxon>
        <taxon>Shigella</taxon>
    </lineage>
</organism>